<keyword id="KW-1185">Reference proteome</keyword>
<gene>
    <name type="ordered locus">gsr3177</name>
</gene>
<evidence type="ECO:0000255" key="1">
    <source>
        <dbReference type="HAMAP-Rule" id="MF_01360"/>
    </source>
</evidence>
<feature type="chain" id="PRO_0000240493" description="UPF0367 protein gsr3177">
    <location>
        <begin position="1"/>
        <end position="93"/>
    </location>
</feature>
<dbReference type="EMBL" id="BA000045">
    <property type="protein sequence ID" value="BAC91118.1"/>
    <property type="molecule type" value="Genomic_DNA"/>
</dbReference>
<dbReference type="RefSeq" id="NP_926123.1">
    <property type="nucleotide sequence ID" value="NC_005125.1"/>
</dbReference>
<dbReference type="RefSeq" id="WP_011143169.1">
    <property type="nucleotide sequence ID" value="NC_005125.1"/>
</dbReference>
<dbReference type="STRING" id="251221.gene:10760684"/>
<dbReference type="EnsemblBacteria" id="BAC91118">
    <property type="protein sequence ID" value="BAC91118"/>
    <property type="gene ID" value="BAC91118"/>
</dbReference>
<dbReference type="KEGG" id="gvi:gsr3177"/>
<dbReference type="eggNOG" id="ENOG5032YB3">
    <property type="taxonomic scope" value="Bacteria"/>
</dbReference>
<dbReference type="HOGENOM" id="CLU_180777_0_0_3"/>
<dbReference type="InParanoid" id="Q7NGJ2"/>
<dbReference type="OrthoDB" id="516864at2"/>
<dbReference type="PhylomeDB" id="Q7NGJ2"/>
<dbReference type="Proteomes" id="UP000000557">
    <property type="component" value="Chromosome"/>
</dbReference>
<dbReference type="HAMAP" id="MF_01360">
    <property type="entry name" value="UPF0367"/>
    <property type="match status" value="1"/>
</dbReference>
<dbReference type="InterPro" id="IPR020885">
    <property type="entry name" value="UPF0367"/>
</dbReference>
<dbReference type="NCBIfam" id="NF010236">
    <property type="entry name" value="PRK13683.1"/>
    <property type="match status" value="1"/>
</dbReference>
<comment type="similarity">
    <text evidence="1">Belongs to the UPF0367 family.</text>
</comment>
<reference key="1">
    <citation type="journal article" date="2003" name="DNA Res.">
        <title>Complete genome structure of Gloeobacter violaceus PCC 7421, a cyanobacterium that lacks thylakoids.</title>
        <authorList>
            <person name="Nakamura Y."/>
            <person name="Kaneko T."/>
            <person name="Sato S."/>
            <person name="Mimuro M."/>
            <person name="Miyashita H."/>
            <person name="Tsuchiya T."/>
            <person name="Sasamoto S."/>
            <person name="Watanabe A."/>
            <person name="Kawashima K."/>
            <person name="Kishida Y."/>
            <person name="Kiyokawa C."/>
            <person name="Kohara M."/>
            <person name="Matsumoto M."/>
            <person name="Matsuno A."/>
            <person name="Nakazaki N."/>
            <person name="Shimpo S."/>
            <person name="Takeuchi C."/>
            <person name="Yamada M."/>
            <person name="Tabata S."/>
        </authorList>
    </citation>
    <scope>NUCLEOTIDE SEQUENCE [LARGE SCALE GENOMIC DNA]</scope>
    <source>
        <strain>ATCC 29082 / PCC 7421</strain>
    </source>
</reference>
<accession>Q7NGJ2</accession>
<sequence>MFTIELILRGNPVALAVQRKDQTAAGDLYAKIRDAMNASPPRVIELTCDKVPEKHLAVMSSDVVAVQLTAAKSGSGAPMGMRAGFFAGESEDE</sequence>
<protein>
    <recommendedName>
        <fullName evidence="1">UPF0367 protein gsr3177</fullName>
    </recommendedName>
</protein>
<proteinExistence type="inferred from homology"/>
<organism>
    <name type="scientific">Gloeobacter violaceus (strain ATCC 29082 / PCC 7421)</name>
    <dbReference type="NCBI Taxonomy" id="251221"/>
    <lineage>
        <taxon>Bacteria</taxon>
        <taxon>Bacillati</taxon>
        <taxon>Cyanobacteriota</taxon>
        <taxon>Cyanophyceae</taxon>
        <taxon>Gloeobacterales</taxon>
        <taxon>Gloeobacteraceae</taxon>
        <taxon>Gloeobacter</taxon>
    </lineage>
</organism>
<name>Y3177_GLOVI</name>